<accession>Q6YRD4</accession>
<feature type="chain" id="PRO_0000168003" description="Small ribosomal subunit protein bS20">
    <location>
        <begin position="1"/>
        <end position="86"/>
    </location>
</feature>
<feature type="region of interest" description="Disordered" evidence="2">
    <location>
        <begin position="1"/>
        <end position="21"/>
    </location>
</feature>
<feature type="compositionally biased region" description="Basic residues" evidence="2">
    <location>
        <begin position="1"/>
        <end position="11"/>
    </location>
</feature>
<name>RS20_ONYPE</name>
<comment type="function">
    <text evidence="1">Binds directly to 16S ribosomal RNA.</text>
</comment>
<comment type="similarity">
    <text evidence="1">Belongs to the bacterial ribosomal protein bS20 family.</text>
</comment>
<evidence type="ECO:0000255" key="1">
    <source>
        <dbReference type="HAMAP-Rule" id="MF_00500"/>
    </source>
</evidence>
<evidence type="ECO:0000256" key="2">
    <source>
        <dbReference type="SAM" id="MobiDB-lite"/>
    </source>
</evidence>
<evidence type="ECO:0000305" key="3"/>
<gene>
    <name evidence="1" type="primary">rpsT</name>
    <name type="ordered locus">PAM_081</name>
</gene>
<organism>
    <name type="scientific">Onion yellows phytoplasma (strain OY-M)</name>
    <dbReference type="NCBI Taxonomy" id="262768"/>
    <lineage>
        <taxon>Bacteria</taxon>
        <taxon>Bacillati</taxon>
        <taxon>Mycoplasmatota</taxon>
        <taxon>Mollicutes</taxon>
        <taxon>Acholeplasmatales</taxon>
        <taxon>Acholeplasmataceae</taxon>
        <taxon>Candidatus Phytoplasma</taxon>
        <taxon>16SrI (Aster yellows group)</taxon>
    </lineage>
</organism>
<dbReference type="EMBL" id="AP006628">
    <property type="protein sequence ID" value="BAD04166.1"/>
    <property type="molecule type" value="Genomic_DNA"/>
</dbReference>
<dbReference type="SMR" id="Q6YRD4"/>
<dbReference type="STRING" id="262768.PAM_081"/>
<dbReference type="KEGG" id="poy:PAM_081"/>
<dbReference type="eggNOG" id="COG0268">
    <property type="taxonomic scope" value="Bacteria"/>
</dbReference>
<dbReference type="HOGENOM" id="CLU_160655_0_1_14"/>
<dbReference type="BioCyc" id="OYEL262768:G1G26-109-MONOMER"/>
<dbReference type="Proteomes" id="UP000002523">
    <property type="component" value="Chromosome"/>
</dbReference>
<dbReference type="GO" id="GO:0005829">
    <property type="term" value="C:cytosol"/>
    <property type="evidence" value="ECO:0007669"/>
    <property type="project" value="TreeGrafter"/>
</dbReference>
<dbReference type="GO" id="GO:0015935">
    <property type="term" value="C:small ribosomal subunit"/>
    <property type="evidence" value="ECO:0007669"/>
    <property type="project" value="TreeGrafter"/>
</dbReference>
<dbReference type="GO" id="GO:0070181">
    <property type="term" value="F:small ribosomal subunit rRNA binding"/>
    <property type="evidence" value="ECO:0007669"/>
    <property type="project" value="TreeGrafter"/>
</dbReference>
<dbReference type="GO" id="GO:0003735">
    <property type="term" value="F:structural constituent of ribosome"/>
    <property type="evidence" value="ECO:0007669"/>
    <property type="project" value="InterPro"/>
</dbReference>
<dbReference type="GO" id="GO:0006412">
    <property type="term" value="P:translation"/>
    <property type="evidence" value="ECO:0007669"/>
    <property type="project" value="UniProtKB-UniRule"/>
</dbReference>
<dbReference type="FunFam" id="1.20.58.110:FF:000001">
    <property type="entry name" value="30S ribosomal protein S20"/>
    <property type="match status" value="1"/>
</dbReference>
<dbReference type="Gene3D" id="1.20.58.110">
    <property type="entry name" value="Ribosomal protein S20"/>
    <property type="match status" value="1"/>
</dbReference>
<dbReference type="HAMAP" id="MF_00500">
    <property type="entry name" value="Ribosomal_bS20"/>
    <property type="match status" value="1"/>
</dbReference>
<dbReference type="InterPro" id="IPR002583">
    <property type="entry name" value="Ribosomal_bS20"/>
</dbReference>
<dbReference type="InterPro" id="IPR036510">
    <property type="entry name" value="Ribosomal_bS20_sf"/>
</dbReference>
<dbReference type="NCBIfam" id="TIGR00029">
    <property type="entry name" value="S20"/>
    <property type="match status" value="1"/>
</dbReference>
<dbReference type="PANTHER" id="PTHR33398">
    <property type="entry name" value="30S RIBOSOMAL PROTEIN S20"/>
    <property type="match status" value="1"/>
</dbReference>
<dbReference type="PANTHER" id="PTHR33398:SF1">
    <property type="entry name" value="SMALL RIBOSOMAL SUBUNIT PROTEIN BS20C"/>
    <property type="match status" value="1"/>
</dbReference>
<dbReference type="Pfam" id="PF01649">
    <property type="entry name" value="Ribosomal_S20p"/>
    <property type="match status" value="1"/>
</dbReference>
<dbReference type="SUPFAM" id="SSF46992">
    <property type="entry name" value="Ribosomal protein S20"/>
    <property type="match status" value="1"/>
</dbReference>
<reference key="1">
    <citation type="journal article" date="2004" name="Nat. Genet.">
        <title>Reductive evolution suggested from the complete genome sequence of a plant-pathogenic phytoplasma.</title>
        <authorList>
            <person name="Oshima K."/>
            <person name="Kakizawa S."/>
            <person name="Nishigawa H."/>
            <person name="Jung H.-Y."/>
            <person name="Wei W."/>
            <person name="Suzuki S."/>
            <person name="Arashida R."/>
            <person name="Nakata D."/>
            <person name="Miyata S."/>
            <person name="Ugaki M."/>
            <person name="Namba S."/>
        </authorList>
    </citation>
    <scope>NUCLEOTIDE SEQUENCE [LARGE SCALE GENOMIC DNA]</scope>
    <source>
        <strain>OY-M</strain>
    </source>
</reference>
<keyword id="KW-0687">Ribonucleoprotein</keyword>
<keyword id="KW-0689">Ribosomal protein</keyword>
<keyword id="KW-0694">RNA-binding</keyword>
<keyword id="KW-0699">rRNA-binding</keyword>
<sequence>MANIKQQKKRNKTNEKRRLQNVSFKSSVKTVVKQVKTAVANADKQKALALLSVAYKKFDKGVSKRVYHANFSARNKSDLQKLVNTL</sequence>
<proteinExistence type="inferred from homology"/>
<protein>
    <recommendedName>
        <fullName evidence="1">Small ribosomal subunit protein bS20</fullName>
    </recommendedName>
    <alternativeName>
        <fullName evidence="3">30S ribosomal protein S20</fullName>
    </alternativeName>
</protein>